<feature type="chain" id="PRO_0000058592" description="N-glycosylase/DNA lyase">
    <location>
        <begin position="1"/>
        <end position="345"/>
    </location>
</feature>
<feature type="active site" description="Schiff-base intermediate with DNA" evidence="1">
    <location>
        <position position="249"/>
    </location>
</feature>
<feature type="binding site" evidence="1">
    <location>
        <position position="149"/>
    </location>
    <ligand>
        <name>DNA</name>
        <dbReference type="ChEBI" id="CHEBI:16991"/>
    </ligand>
</feature>
<feature type="binding site" evidence="1">
    <location>
        <position position="154"/>
    </location>
    <ligand>
        <name>DNA</name>
        <dbReference type="ChEBI" id="CHEBI:16991"/>
    </ligand>
</feature>
<feature type="binding site" evidence="1">
    <location>
        <position position="204"/>
    </location>
    <ligand>
        <name>DNA</name>
        <dbReference type="ChEBI" id="CHEBI:16991"/>
    </ligand>
</feature>
<feature type="binding site" evidence="1">
    <location>
        <position position="266"/>
    </location>
    <ligand>
        <name>8-oxoguanine</name>
        <dbReference type="ChEBI" id="CHEBI:52617"/>
    </ligand>
</feature>
<feature type="binding site" evidence="1">
    <location>
        <position position="268"/>
    </location>
    <ligand>
        <name>8-oxoguanine</name>
        <dbReference type="ChEBI" id="CHEBI:52617"/>
    </ligand>
</feature>
<feature type="binding site" evidence="1">
    <location>
        <position position="270"/>
    </location>
    <ligand>
        <name>DNA</name>
        <dbReference type="ChEBI" id="CHEBI:16991"/>
    </ligand>
</feature>
<feature type="binding site" evidence="1">
    <location>
        <position position="287"/>
    </location>
    <ligand>
        <name>DNA</name>
        <dbReference type="ChEBI" id="CHEBI:16991"/>
    </ligand>
</feature>
<feature type="binding site" evidence="1">
    <location>
        <position position="315"/>
    </location>
    <ligand>
        <name>8-oxoguanine</name>
        <dbReference type="ChEBI" id="CHEBI:52617"/>
    </ligand>
</feature>
<feature type="binding site" evidence="1">
    <location>
        <position position="319"/>
    </location>
    <ligand>
        <name>8-oxoguanine</name>
        <dbReference type="ChEBI" id="CHEBI:52617"/>
    </ligand>
</feature>
<feature type="sequence conflict" description="In Ref. 1; AAB61289." evidence="2" ref="1">
    <original>S</original>
    <variation>Q</variation>
    <location>
        <position position="10"/>
    </location>
</feature>
<feature type="sequence conflict" description="In Ref. 1; AAB61289." evidence="2" ref="1">
    <original>WAS</original>
    <variation>SVA</variation>
    <location>
        <begin position="23"/>
        <end position="25"/>
    </location>
</feature>
<feature type="sequence conflict" description="In Ref. 1; AAB61289." evidence="2" ref="1">
    <original>A</original>
    <variation>G</variation>
    <location>
        <position position="239"/>
    </location>
</feature>
<feature type="sequence conflict" description="In Ref. 6; CAA73883." evidence="2" ref="6">
    <original>L</original>
    <variation>S</variation>
    <location>
        <position position="299"/>
    </location>
</feature>
<feature type="sequence conflict" description="In Ref. 4; AAB81133." evidence="2" ref="4">
    <original>S</original>
    <variation>F</variation>
    <location>
        <position position="329"/>
    </location>
</feature>
<feature type="sequence conflict" description="In Ref. 6; CAA73883 and 7; CAB65240." evidence="2" ref="6 7">
    <original>R</original>
    <variation>H</variation>
    <location>
        <position position="336"/>
    </location>
</feature>
<feature type="turn" evidence="7">
    <location>
        <begin position="16"/>
        <end position="18"/>
    </location>
</feature>
<feature type="helix" evidence="7">
    <location>
        <begin position="20"/>
        <end position="22"/>
    </location>
</feature>
<feature type="strand" evidence="7">
    <location>
        <begin position="24"/>
        <end position="27"/>
    </location>
</feature>
<feature type="turn" evidence="7">
    <location>
        <begin position="30"/>
        <end position="32"/>
    </location>
</feature>
<feature type="helix" evidence="7">
    <location>
        <begin position="35"/>
        <end position="38"/>
    </location>
</feature>
<feature type="strand" evidence="7">
    <location>
        <begin position="41"/>
        <end position="43"/>
    </location>
</feature>
<feature type="strand" evidence="7">
    <location>
        <begin position="47"/>
        <end position="51"/>
    </location>
</feature>
<feature type="strand" evidence="7">
    <location>
        <begin position="54"/>
        <end position="59"/>
    </location>
</feature>
<feature type="strand" evidence="7">
    <location>
        <begin position="62"/>
        <end position="68"/>
    </location>
</feature>
<feature type="strand" evidence="7">
    <location>
        <begin position="70"/>
        <end position="78"/>
    </location>
</feature>
<feature type="strand" evidence="3">
    <location>
        <begin position="81"/>
        <end position="83"/>
    </location>
</feature>
<feature type="helix" evidence="7">
    <location>
        <begin position="90"/>
        <end position="99"/>
    </location>
</feature>
<feature type="turn" evidence="7">
    <location>
        <begin position="100"/>
        <end position="103"/>
    </location>
</feature>
<feature type="helix" evidence="7">
    <location>
        <begin position="106"/>
        <end position="114"/>
    </location>
</feature>
<feature type="helix" evidence="7">
    <location>
        <begin position="118"/>
        <end position="124"/>
    </location>
</feature>
<feature type="helix" evidence="7">
    <location>
        <begin position="137"/>
        <end position="145"/>
    </location>
</feature>
<feature type="turn" evidence="7">
    <location>
        <begin position="146"/>
        <end position="149"/>
    </location>
</feature>
<feature type="helix" evidence="7">
    <location>
        <begin position="152"/>
        <end position="166"/>
    </location>
</feature>
<feature type="strand" evidence="7">
    <location>
        <begin position="169"/>
        <end position="173"/>
    </location>
</feature>
<feature type="strand" evidence="7">
    <location>
        <begin position="176"/>
        <end position="179"/>
    </location>
</feature>
<feature type="helix" evidence="7">
    <location>
        <begin position="184"/>
        <end position="187"/>
    </location>
</feature>
<feature type="strand" evidence="5">
    <location>
        <begin position="189"/>
        <end position="191"/>
    </location>
</feature>
<feature type="helix" evidence="7">
    <location>
        <begin position="192"/>
        <end position="198"/>
    </location>
</feature>
<feature type="helix" evidence="7">
    <location>
        <begin position="204"/>
        <end position="218"/>
    </location>
</feature>
<feature type="helix" evidence="7">
    <location>
        <begin position="223"/>
        <end position="230"/>
    </location>
</feature>
<feature type="helix" evidence="7">
    <location>
        <begin position="233"/>
        <end position="240"/>
    </location>
</feature>
<feature type="strand" evidence="6">
    <location>
        <begin position="243"/>
        <end position="245"/>
    </location>
</feature>
<feature type="helix" evidence="7">
    <location>
        <begin position="248"/>
        <end position="258"/>
    </location>
</feature>
<feature type="helix" evidence="7">
    <location>
        <begin position="269"/>
        <end position="279"/>
    </location>
</feature>
<feature type="strand" evidence="4">
    <location>
        <begin position="284"/>
        <end position="290"/>
    </location>
</feature>
<feature type="helix" evidence="7">
    <location>
        <begin position="293"/>
        <end position="307"/>
    </location>
</feature>
<feature type="helix" evidence="7">
    <location>
        <begin position="311"/>
        <end position="322"/>
    </location>
</feature>
<evidence type="ECO:0000250" key="1"/>
<evidence type="ECO:0000305" key="2"/>
<evidence type="ECO:0007829" key="3">
    <source>
        <dbReference type="PDB" id="6G3X"/>
    </source>
</evidence>
<evidence type="ECO:0007829" key="4">
    <source>
        <dbReference type="PDB" id="6G40"/>
    </source>
</evidence>
<evidence type="ECO:0007829" key="5">
    <source>
        <dbReference type="PDB" id="7ZC7"/>
    </source>
</evidence>
<evidence type="ECO:0007829" key="6">
    <source>
        <dbReference type="PDB" id="7ZG3"/>
    </source>
</evidence>
<evidence type="ECO:0007829" key="7">
    <source>
        <dbReference type="PDB" id="8CEY"/>
    </source>
</evidence>
<gene>
    <name type="primary">Ogg1</name>
</gene>
<protein>
    <recommendedName>
        <fullName>N-glycosylase/DNA lyase</fullName>
    </recommendedName>
    <domain>
        <recommendedName>
            <fullName>8-oxoguanine DNA glycosylase</fullName>
            <ecNumber>3.2.2.-</ecNumber>
        </recommendedName>
    </domain>
    <domain>
        <recommendedName>
            <fullName>DNA-(apurinic or apyrimidinic site) lyase</fullName>
            <shortName>AP lyase</shortName>
            <ecNumber>4.2.99.18</ecNumber>
        </recommendedName>
    </domain>
</protein>
<proteinExistence type="evidence at protein level"/>
<sequence length="345" mass="38883">MLFRSWLPSSMRHRTLSSSPALWASIPCPRSELRLDLVLASGQSFRWKEQSPAHWSGVLADQVWTLTQTEDQLYCTVYRGDDSQVSRPTLEELETLHKYFQLDVSLAQLYSHWASVDSHFQRVAQKFQGVRLLRQDPTECLFSFICSSNNNIARITGMVERLCQAFGPRLIQLDDVTYHGFPNLHALAGPEAETHLRKLGLGYRARYVRASAKAILEEQGGPAWLQQLRVAPYEEAHKALCTLPGVGAKVADCICLMALDKPQAVPVDVHVWQIAHRDYGWHPKTSQAKGPSPLANKELGNFFRNLWGPYAGWAQAVLFSADLRQPSLSREPPAKRKKGSKRPEG</sequence>
<dbReference type="EC" id="3.2.2.-"/>
<dbReference type="EC" id="4.2.99.18"/>
<dbReference type="EMBL" id="AF003596">
    <property type="protein sequence ID" value="AAB61289.1"/>
    <property type="molecule type" value="mRNA"/>
</dbReference>
<dbReference type="EMBL" id="Y11247">
    <property type="protein sequence ID" value="CAA72117.1"/>
    <property type="molecule type" value="mRNA"/>
</dbReference>
<dbReference type="EMBL" id="U88621">
    <property type="protein sequence ID" value="AAB68616.1"/>
    <property type="molecule type" value="mRNA"/>
</dbReference>
<dbReference type="EMBL" id="U96711">
    <property type="protein sequence ID" value="AAB81133.1"/>
    <property type="molecule type" value="mRNA"/>
</dbReference>
<dbReference type="EMBL" id="AF000669">
    <property type="protein sequence ID" value="AAB63151.1"/>
    <property type="molecule type" value="mRNA"/>
</dbReference>
<dbReference type="EMBL" id="AF012916">
    <property type="protein sequence ID" value="AAB94512.1"/>
    <property type="molecule type" value="Genomic_DNA"/>
</dbReference>
<dbReference type="EMBL" id="AF012912">
    <property type="protein sequence ID" value="AAB94512.1"/>
    <property type="status" value="JOINED"/>
    <property type="molecule type" value="Genomic_DNA"/>
</dbReference>
<dbReference type="EMBL" id="AF012913">
    <property type="protein sequence ID" value="AAB94512.1"/>
    <property type="status" value="JOINED"/>
    <property type="molecule type" value="Genomic_DNA"/>
</dbReference>
<dbReference type="EMBL" id="AF012914">
    <property type="protein sequence ID" value="AAB94512.1"/>
    <property type="status" value="JOINED"/>
    <property type="molecule type" value="Genomic_DNA"/>
</dbReference>
<dbReference type="EMBL" id="AF012915">
    <property type="protein sequence ID" value="AAB94512.1"/>
    <property type="status" value="JOINED"/>
    <property type="molecule type" value="Genomic_DNA"/>
</dbReference>
<dbReference type="EMBL" id="Y13479">
    <property type="protein sequence ID" value="CAA73883.1"/>
    <property type="molecule type" value="mRNA"/>
</dbReference>
<dbReference type="EMBL" id="AJ001307">
    <property type="protein sequence ID" value="CAB65240.1"/>
    <property type="molecule type" value="Genomic_DNA"/>
</dbReference>
<dbReference type="CCDS" id="CCDS20414.1"/>
<dbReference type="PIR" id="T46962">
    <property type="entry name" value="T46962"/>
</dbReference>
<dbReference type="RefSeq" id="NP_035087.3">
    <property type="nucleotide sequence ID" value="NM_010957.4"/>
</dbReference>
<dbReference type="PDB" id="6G3X">
    <property type="method" value="X-ray"/>
    <property type="resolution" value="2.10 A"/>
    <property type="chains" value="A/B/C=11-325"/>
</dbReference>
<dbReference type="PDB" id="6G3Y">
    <property type="method" value="X-ray"/>
    <property type="resolution" value="2.51 A"/>
    <property type="chains" value="A/B/C=9-325"/>
</dbReference>
<dbReference type="PDB" id="6G40">
    <property type="method" value="X-ray"/>
    <property type="resolution" value="2.49 A"/>
    <property type="chains" value="A/B/C=9-325"/>
</dbReference>
<dbReference type="PDB" id="7AYZ">
    <property type="method" value="X-ray"/>
    <property type="resolution" value="2.60 A"/>
    <property type="chains" value="AAA/BBB/CCC=9-325"/>
</dbReference>
<dbReference type="PDB" id="7AZ0">
    <property type="method" value="X-ray"/>
    <property type="resolution" value="2.40 A"/>
    <property type="chains" value="AAA/BBB/CCC=9-325"/>
</dbReference>
<dbReference type="PDB" id="7PZ1">
    <property type="method" value="X-ray"/>
    <property type="resolution" value="2.45 A"/>
    <property type="chains" value="AAA/BBB/CCC=9-325"/>
</dbReference>
<dbReference type="PDB" id="7QEL">
    <property type="method" value="X-ray"/>
    <property type="resolution" value="2.50 A"/>
    <property type="chains" value="AAA/BBB/CCC=9-325"/>
</dbReference>
<dbReference type="PDB" id="7Z3Y">
    <property type="method" value="X-ray"/>
    <property type="resolution" value="2.35 A"/>
    <property type="chains" value="AAA/BBB/CCC=9-325"/>
</dbReference>
<dbReference type="PDB" id="7Z5B">
    <property type="method" value="X-ray"/>
    <property type="resolution" value="2.60 A"/>
    <property type="chains" value="A/B/C=9-325"/>
</dbReference>
<dbReference type="PDB" id="7Z5R">
    <property type="method" value="X-ray"/>
    <property type="resolution" value="2.50 A"/>
    <property type="chains" value="A/B/C=9-325"/>
</dbReference>
<dbReference type="PDB" id="7ZC7">
    <property type="method" value="X-ray"/>
    <property type="resolution" value="2.30 A"/>
    <property type="chains" value="A/B/C=9-325"/>
</dbReference>
<dbReference type="PDB" id="7ZG3">
    <property type="method" value="X-ray"/>
    <property type="resolution" value="2.30 A"/>
    <property type="chains" value="A/B/C=9-325"/>
</dbReference>
<dbReference type="PDB" id="8BQ7">
    <property type="method" value="X-ray"/>
    <property type="resolution" value="2.60 A"/>
    <property type="chains" value="A/B/C=9-325"/>
</dbReference>
<dbReference type="PDB" id="8BVX">
    <property type="method" value="X-ray"/>
    <property type="resolution" value="2.35 A"/>
    <property type="chains" value="A/B/C=9-325"/>
</dbReference>
<dbReference type="PDB" id="8CEX">
    <property type="method" value="X-ray"/>
    <property type="resolution" value="2.30 A"/>
    <property type="chains" value="A/B/C=11-325"/>
</dbReference>
<dbReference type="PDB" id="8CEY">
    <property type="method" value="X-ray"/>
    <property type="resolution" value="1.95 A"/>
    <property type="chains" value="A/B/C=11-325"/>
</dbReference>
<dbReference type="PDBsum" id="6G3X"/>
<dbReference type="PDBsum" id="6G3Y"/>
<dbReference type="PDBsum" id="6G40"/>
<dbReference type="PDBsum" id="7AYZ"/>
<dbReference type="PDBsum" id="7AZ0"/>
<dbReference type="PDBsum" id="7PZ1"/>
<dbReference type="PDBsum" id="7QEL"/>
<dbReference type="PDBsum" id="7Z3Y"/>
<dbReference type="PDBsum" id="7Z5B"/>
<dbReference type="PDBsum" id="7Z5R"/>
<dbReference type="PDBsum" id="7ZC7"/>
<dbReference type="PDBsum" id="7ZG3"/>
<dbReference type="PDBsum" id="8BQ7"/>
<dbReference type="PDBsum" id="8BVX"/>
<dbReference type="PDBsum" id="8CEX"/>
<dbReference type="PDBsum" id="8CEY"/>
<dbReference type="SMR" id="O08760"/>
<dbReference type="BioGRID" id="201906">
    <property type="interactions" value="9"/>
</dbReference>
<dbReference type="FunCoup" id="O08760">
    <property type="interactions" value="3243"/>
</dbReference>
<dbReference type="IntAct" id="O08760">
    <property type="interactions" value="2"/>
</dbReference>
<dbReference type="STRING" id="10090.ENSMUSP00000032406"/>
<dbReference type="GlyGen" id="O08760">
    <property type="glycosylation" value="1 site, 1 O-linked glycan (1 site)"/>
</dbReference>
<dbReference type="PhosphoSitePlus" id="O08760"/>
<dbReference type="PaxDb" id="10090-ENSMUSP00000032406"/>
<dbReference type="PeptideAtlas" id="O08760"/>
<dbReference type="ProteomicsDB" id="289970"/>
<dbReference type="Antibodypedia" id="25518">
    <property type="antibodies" value="483 antibodies from 38 providers"/>
</dbReference>
<dbReference type="DNASU" id="18294"/>
<dbReference type="Ensembl" id="ENSMUST00000032406.15">
    <property type="protein sequence ID" value="ENSMUSP00000032406.9"/>
    <property type="gene ID" value="ENSMUSG00000030271.15"/>
</dbReference>
<dbReference type="GeneID" id="18294"/>
<dbReference type="KEGG" id="mmu:18294"/>
<dbReference type="UCSC" id="uc009dfh.2">
    <property type="organism name" value="mouse"/>
</dbReference>
<dbReference type="AGR" id="MGI:1097693"/>
<dbReference type="CTD" id="4968"/>
<dbReference type="MGI" id="MGI:1097693">
    <property type="gene designation" value="Ogg1"/>
</dbReference>
<dbReference type="VEuPathDB" id="HostDB:ENSMUSG00000030271"/>
<dbReference type="eggNOG" id="KOG2875">
    <property type="taxonomic scope" value="Eukaryota"/>
</dbReference>
<dbReference type="GeneTree" id="ENSGT00640000091554"/>
<dbReference type="HOGENOM" id="CLU_027543_3_2_1"/>
<dbReference type="InParanoid" id="O08760"/>
<dbReference type="OMA" id="GYAQEYL"/>
<dbReference type="OrthoDB" id="238681at2759"/>
<dbReference type="PhylomeDB" id="O08760"/>
<dbReference type="TreeFam" id="TF323702"/>
<dbReference type="Reactome" id="R-MMU-110329">
    <property type="pathway name" value="Cleavage of the damaged pyrimidine"/>
</dbReference>
<dbReference type="Reactome" id="R-MMU-110330">
    <property type="pathway name" value="Recognition and association of DNA glycosylase with site containing an affected purine"/>
</dbReference>
<dbReference type="Reactome" id="R-MMU-110331">
    <property type="pathway name" value="Cleavage of the damaged purine"/>
</dbReference>
<dbReference type="Reactome" id="R-MMU-110357">
    <property type="pathway name" value="Displacement of DNA glycosylase by APEX1"/>
</dbReference>
<dbReference type="Reactome" id="R-MMU-5649702">
    <property type="pathway name" value="APEX1-Independent Resolution of AP Sites via the Single Nucleotide Replacement Pathway"/>
</dbReference>
<dbReference type="BioGRID-ORCS" id="18294">
    <property type="hits" value="4 hits in 111 CRISPR screens"/>
</dbReference>
<dbReference type="CD-CODE" id="01CA17F3">
    <property type="entry name" value="Centrosome"/>
</dbReference>
<dbReference type="PRO" id="PR:O08760"/>
<dbReference type="Proteomes" id="UP000000589">
    <property type="component" value="Chromosome 6"/>
</dbReference>
<dbReference type="RNAct" id="O08760">
    <property type="molecule type" value="protein"/>
</dbReference>
<dbReference type="Bgee" id="ENSMUSG00000030271">
    <property type="expression patterns" value="Expressed in spermatocyte and 123 other cell types or tissues"/>
</dbReference>
<dbReference type="ExpressionAtlas" id="O08760">
    <property type="expression patterns" value="baseline and differential"/>
</dbReference>
<dbReference type="GO" id="GO:0005739">
    <property type="term" value="C:mitochondrion"/>
    <property type="evidence" value="ECO:0000315"/>
    <property type="project" value="MGI"/>
</dbReference>
<dbReference type="GO" id="GO:0016363">
    <property type="term" value="C:nuclear matrix"/>
    <property type="evidence" value="ECO:0000250"/>
    <property type="project" value="UniProtKB"/>
</dbReference>
<dbReference type="GO" id="GO:0016607">
    <property type="term" value="C:nuclear speck"/>
    <property type="evidence" value="ECO:0000250"/>
    <property type="project" value="UniProtKB"/>
</dbReference>
<dbReference type="GO" id="GO:0005654">
    <property type="term" value="C:nucleoplasm"/>
    <property type="evidence" value="ECO:0000250"/>
    <property type="project" value="UniProtKB"/>
</dbReference>
<dbReference type="GO" id="GO:0005634">
    <property type="term" value="C:nucleus"/>
    <property type="evidence" value="ECO:0000315"/>
    <property type="project" value="MGI"/>
</dbReference>
<dbReference type="GO" id="GO:0032991">
    <property type="term" value="C:protein-containing complex"/>
    <property type="evidence" value="ECO:0000266"/>
    <property type="project" value="MGI"/>
</dbReference>
<dbReference type="GO" id="GO:0034039">
    <property type="term" value="F:8-oxo-7,8-dihydroguanine DNA N-glycosylase activity"/>
    <property type="evidence" value="ECO:0000315"/>
    <property type="project" value="MGI"/>
</dbReference>
<dbReference type="GO" id="GO:0140078">
    <property type="term" value="F:class I DNA-(apurinic or apyrimidinic site) endonuclease activity"/>
    <property type="evidence" value="ECO:0007669"/>
    <property type="project" value="UniProtKB-EC"/>
</dbReference>
<dbReference type="GO" id="GO:0003677">
    <property type="term" value="F:DNA binding"/>
    <property type="evidence" value="ECO:0000266"/>
    <property type="project" value="MGI"/>
</dbReference>
<dbReference type="GO" id="GO:0019104">
    <property type="term" value="F:DNA N-glycosylase activity"/>
    <property type="evidence" value="ECO:0000304"/>
    <property type="project" value="MGI"/>
</dbReference>
<dbReference type="GO" id="GO:0019899">
    <property type="term" value="F:enzyme binding"/>
    <property type="evidence" value="ECO:0007669"/>
    <property type="project" value="Ensembl"/>
</dbReference>
<dbReference type="GO" id="GO:0008017">
    <property type="term" value="F:microtubule binding"/>
    <property type="evidence" value="ECO:0000314"/>
    <property type="project" value="MGI"/>
</dbReference>
<dbReference type="GO" id="GO:0000702">
    <property type="term" value="F:oxidized base lesion DNA N-glycosylase activity"/>
    <property type="evidence" value="ECO:0000304"/>
    <property type="project" value="MGI"/>
</dbReference>
<dbReference type="GO" id="GO:0032357">
    <property type="term" value="F:oxidized purine DNA binding"/>
    <property type="evidence" value="ECO:0007669"/>
    <property type="project" value="Ensembl"/>
</dbReference>
<dbReference type="GO" id="GO:0008534">
    <property type="term" value="F:oxidized purine nucleobase lesion DNA N-glycosylase activity"/>
    <property type="evidence" value="ECO:0000314"/>
    <property type="project" value="MGI"/>
</dbReference>
<dbReference type="GO" id="GO:0000978">
    <property type="term" value="F:RNA polymerase II cis-regulatory region sequence-specific DNA binding"/>
    <property type="evidence" value="ECO:0007669"/>
    <property type="project" value="Ensembl"/>
</dbReference>
<dbReference type="GO" id="GO:0006284">
    <property type="term" value="P:base-excision repair"/>
    <property type="evidence" value="ECO:0000314"/>
    <property type="project" value="MGI"/>
</dbReference>
<dbReference type="GO" id="GO:0034614">
    <property type="term" value="P:cellular response to reactive oxygen species"/>
    <property type="evidence" value="ECO:0007669"/>
    <property type="project" value="Ensembl"/>
</dbReference>
<dbReference type="GO" id="GO:0006974">
    <property type="term" value="P:DNA damage response"/>
    <property type="evidence" value="ECO:0000266"/>
    <property type="project" value="MGI"/>
</dbReference>
<dbReference type="GO" id="GO:0006281">
    <property type="term" value="P:DNA repair"/>
    <property type="evidence" value="ECO:0000315"/>
    <property type="project" value="MGI"/>
</dbReference>
<dbReference type="GO" id="GO:1901291">
    <property type="term" value="P:negative regulation of double-strand break repair via single-strand annealing"/>
    <property type="evidence" value="ECO:0000266"/>
    <property type="project" value="MGI"/>
</dbReference>
<dbReference type="GO" id="GO:0006289">
    <property type="term" value="P:nucleotide-excision repair"/>
    <property type="evidence" value="ECO:0000266"/>
    <property type="project" value="MGI"/>
</dbReference>
<dbReference type="GO" id="GO:0044029">
    <property type="term" value="P:positive regulation of gene expression via chromosomal CpG island demethylation"/>
    <property type="evidence" value="ECO:0007669"/>
    <property type="project" value="Ensembl"/>
</dbReference>
<dbReference type="GO" id="GO:0045944">
    <property type="term" value="P:positive regulation of transcription by RNA polymerase II"/>
    <property type="evidence" value="ECO:0007669"/>
    <property type="project" value="Ensembl"/>
</dbReference>
<dbReference type="GO" id="GO:0006355">
    <property type="term" value="P:regulation of DNA-templated transcription"/>
    <property type="evidence" value="ECO:0000250"/>
    <property type="project" value="UniProtKB"/>
</dbReference>
<dbReference type="GO" id="GO:0006979">
    <property type="term" value="P:response to oxidative stress"/>
    <property type="evidence" value="ECO:0000250"/>
    <property type="project" value="UniProtKB"/>
</dbReference>
<dbReference type="GO" id="GO:0009314">
    <property type="term" value="P:response to radiation"/>
    <property type="evidence" value="ECO:0000250"/>
    <property type="project" value="UniProtKB"/>
</dbReference>
<dbReference type="CDD" id="cd00056">
    <property type="entry name" value="ENDO3c"/>
    <property type="match status" value="1"/>
</dbReference>
<dbReference type="FunFam" id="1.10.1670.10:FF:000013">
    <property type="entry name" value="8-oxoguanine DNA glycosylase"/>
    <property type="match status" value="1"/>
</dbReference>
<dbReference type="FunFam" id="1.10.340.30:FF:000006">
    <property type="entry name" value="N-glycosylase/DNA lyase isoform X2"/>
    <property type="match status" value="1"/>
</dbReference>
<dbReference type="FunFam" id="3.30.310.40:FF:000001">
    <property type="entry name" value="N-glycosylase/DNA lyase isoform X2"/>
    <property type="match status" value="1"/>
</dbReference>
<dbReference type="FunFam" id="1.10.1670.10:FF:000005">
    <property type="entry name" value="N-glycosylase/DNA lyase OGG1"/>
    <property type="match status" value="1"/>
</dbReference>
<dbReference type="Gene3D" id="3.30.310.40">
    <property type="match status" value="1"/>
</dbReference>
<dbReference type="Gene3D" id="1.10.1670.10">
    <property type="entry name" value="Helix-hairpin-Helix base-excision DNA repair enzymes (C-terminal)"/>
    <property type="match status" value="1"/>
</dbReference>
<dbReference type="Gene3D" id="1.10.340.30">
    <property type="entry name" value="Hypothetical protein, domain 2"/>
    <property type="match status" value="1"/>
</dbReference>
<dbReference type="InterPro" id="IPR011257">
    <property type="entry name" value="DNA_glycosylase"/>
</dbReference>
<dbReference type="InterPro" id="IPR003265">
    <property type="entry name" value="HhH-GPD_domain"/>
</dbReference>
<dbReference type="InterPro" id="IPR023170">
    <property type="entry name" value="HhH_base_excis_C"/>
</dbReference>
<dbReference type="InterPro" id="IPR004577">
    <property type="entry name" value="Ogg1"/>
</dbReference>
<dbReference type="InterPro" id="IPR012904">
    <property type="entry name" value="OGG_N"/>
</dbReference>
<dbReference type="InterPro" id="IPR052054">
    <property type="entry name" value="Oxidative_DNA_repair_enzyme"/>
</dbReference>
<dbReference type="NCBIfam" id="TIGR00588">
    <property type="entry name" value="ogg"/>
    <property type="match status" value="1"/>
</dbReference>
<dbReference type="PANTHER" id="PTHR10242">
    <property type="entry name" value="8-OXOGUANINE DNA GLYCOSYLASE"/>
    <property type="match status" value="1"/>
</dbReference>
<dbReference type="PANTHER" id="PTHR10242:SF2">
    <property type="entry name" value="N-GLYCOSYLASE_DNA LYASE"/>
    <property type="match status" value="1"/>
</dbReference>
<dbReference type="Pfam" id="PF00730">
    <property type="entry name" value="HhH-GPD"/>
    <property type="match status" value="1"/>
</dbReference>
<dbReference type="Pfam" id="PF07934">
    <property type="entry name" value="OGG_N"/>
    <property type="match status" value="1"/>
</dbReference>
<dbReference type="SMART" id="SM00478">
    <property type="entry name" value="ENDO3c"/>
    <property type="match status" value="1"/>
</dbReference>
<dbReference type="SUPFAM" id="SSF48150">
    <property type="entry name" value="DNA-glycosylase"/>
    <property type="match status" value="1"/>
</dbReference>
<dbReference type="SUPFAM" id="SSF55945">
    <property type="entry name" value="TATA-box binding protein-like"/>
    <property type="match status" value="1"/>
</dbReference>
<keyword id="KW-0002">3D-structure</keyword>
<keyword id="KW-0227">DNA damage</keyword>
<keyword id="KW-0234">DNA repair</keyword>
<keyword id="KW-0326">Glycosidase</keyword>
<keyword id="KW-0378">Hydrolase</keyword>
<keyword id="KW-0456">Lyase</keyword>
<keyword id="KW-0511">Multifunctional enzyme</keyword>
<keyword id="KW-0539">Nucleus</keyword>
<keyword id="KW-1185">Reference proteome</keyword>
<organism>
    <name type="scientific">Mus musculus</name>
    <name type="common">Mouse</name>
    <dbReference type="NCBI Taxonomy" id="10090"/>
    <lineage>
        <taxon>Eukaryota</taxon>
        <taxon>Metazoa</taxon>
        <taxon>Chordata</taxon>
        <taxon>Craniata</taxon>
        <taxon>Vertebrata</taxon>
        <taxon>Euteleostomi</taxon>
        <taxon>Mammalia</taxon>
        <taxon>Eutheria</taxon>
        <taxon>Euarchontoglires</taxon>
        <taxon>Glires</taxon>
        <taxon>Rodentia</taxon>
        <taxon>Myomorpha</taxon>
        <taxon>Muroidea</taxon>
        <taxon>Muridae</taxon>
        <taxon>Murinae</taxon>
        <taxon>Mus</taxon>
        <taxon>Mus</taxon>
    </lineage>
</organism>
<reference key="1">
    <citation type="journal article" date="1997" name="Cancer Res.">
        <title>Cloning and characterization of mammalian 8-hydroxyguanine-specific DNA glycosylase/apurinic, apyrimidinic lyase, a functional mutM homologue.</title>
        <authorList>
            <person name="Aburatani H."/>
            <person name="Hippo Y."/>
            <person name="Ishida T."/>
            <person name="Takashima R."/>
            <person name="Matsuba C."/>
            <person name="Kodama T."/>
            <person name="Takao M."/>
            <person name="Yasui A."/>
            <person name="Yamamoto K."/>
            <person name="Asano M."/>
            <person name="Fukasawa K."/>
            <person name="Yoshinari T."/>
            <person name="Inoue H."/>
            <person name="Otsuka E."/>
            <person name="Nishimura S."/>
        </authorList>
    </citation>
    <scope>NUCLEOTIDE SEQUENCE [MRNA]</scope>
</reference>
<reference key="2">
    <citation type="journal article" date="1997" name="Curr. Biol.">
        <title>A mammalian DNA repair enzyme that excises oxidatively damaged guanines maps to a locus frequently lost in lung cancer.</title>
        <authorList>
            <person name="Lu R."/>
            <person name="Nash H.M."/>
            <person name="Verdine G.L."/>
        </authorList>
    </citation>
    <scope>NUCLEOTIDE SEQUENCE [MRNA]</scope>
</reference>
<reference key="3">
    <citation type="journal article" date="1997" name="EMBO J.">
        <title>Opposite base-dependent reactions of a human base excision repair enzyme on DNA containing 7,8-dihydro-8-oxoguanine and abasic sites.</title>
        <authorList>
            <person name="Bjoras M."/>
            <person name="Luna L."/>
            <person name="Johnsen B.E."/>
            <person name="Hoff E."/>
            <person name="Haug T."/>
            <person name="Rognes T."/>
            <person name="Seeberg E."/>
        </authorList>
    </citation>
    <scope>NUCLEOTIDE SEQUENCE [MRNA]</scope>
    <source>
        <tissue>Lung</tissue>
    </source>
</reference>
<reference key="4">
    <citation type="journal article" date="1997" name="Proc. Natl. Acad. Sci. U.S.A.">
        <title>Cloning and characterization of a mammalian 8-oxoguanine DNA glycosylase.</title>
        <authorList>
            <person name="Rosenquist T.A."/>
            <person name="Zharkov D.O."/>
            <person name="Grollman A.P."/>
        </authorList>
    </citation>
    <scope>NUCLEOTIDE SEQUENCE [MRNA]</scope>
</reference>
<reference key="5">
    <citation type="journal article" date="1998" name="Mamm. Genome">
        <title>Genomic structure and chromosomal localization of the mouse Ogg1 gene that is involved in the repair of 8-hydroxyguanine in DNA damage.</title>
        <authorList>
            <person name="Tani M."/>
            <person name="Shinmura K."/>
            <person name="Kohno T."/>
            <person name="Takenoshita S."/>
            <person name="Nagamachi Y."/>
            <person name="Yokota J."/>
        </authorList>
    </citation>
    <scope>NUCLEOTIDE SEQUENCE [GENOMIC DNA / MRNA]</scope>
    <source>
        <strain>C3H/HeN</strain>
        <tissue>Melanoma</tissue>
    </source>
</reference>
<reference key="6">
    <citation type="submission" date="1997-06" db="EMBL/GenBank/DDBJ databases">
        <authorList>
            <person name="Radicella J.P."/>
            <person name="Reille F."/>
            <person name="Dherin C."/>
            <person name="Boiteux S."/>
        </authorList>
    </citation>
    <scope>NUCLEOTIDE SEQUENCE [MRNA]</scope>
    <source>
        <strain>C57BL/6J</strain>
    </source>
</reference>
<reference key="7">
    <citation type="submission" date="1997-08" db="EMBL/GenBank/DDBJ databases">
        <title>Complete genomic DNA sequence of the Mus musculus 8-oxoguanine DNA glycosylase 1 gene (OGH1).</title>
        <authorList>
            <person name="Johnsen B."/>
            <person name="Luna L."/>
            <person name="Rognes T."/>
            <person name="Seeberg E."/>
        </authorList>
    </citation>
    <scope>NUCLEOTIDE SEQUENCE [GENOMIC DNA]</scope>
    <source>
        <strain>129/Sv</strain>
        <tissue>Embryonic stem cell</tissue>
    </source>
</reference>
<accession>O08760</accession>
<accession>O08733</accession>
<accession>O08910</accession>
<accession>O08991</accession>
<accession>O35617</accession>
<accession>O35915</accession>
<accession>Q9QXE8</accession>
<comment type="function">
    <text>DNA repair enzyme that incises DNA at 8-oxoG residues. Excises 7,8-dihydro-8-oxoguanine and 2,6-diamino-4-hydroxy-5-N-methylformamidopyrimidine (FAPY) from damaged DNA. Has a beta-lyase activity that nicks DNA 3' to the lesion.</text>
</comment>
<comment type="catalytic activity">
    <reaction>
        <text>2'-deoxyribonucleotide-(2'-deoxyribose 5'-phosphate)-2'-deoxyribonucleotide-DNA = a 3'-end 2'-deoxyribonucleotide-(2,3-dehydro-2,3-deoxyribose 5'-phosphate)-DNA + a 5'-end 5'-phospho-2'-deoxyribonucleoside-DNA + H(+)</text>
        <dbReference type="Rhea" id="RHEA:66592"/>
        <dbReference type="Rhea" id="RHEA-COMP:13180"/>
        <dbReference type="Rhea" id="RHEA-COMP:16897"/>
        <dbReference type="Rhea" id="RHEA-COMP:17067"/>
        <dbReference type="ChEBI" id="CHEBI:15378"/>
        <dbReference type="ChEBI" id="CHEBI:136412"/>
        <dbReference type="ChEBI" id="CHEBI:157695"/>
        <dbReference type="ChEBI" id="CHEBI:167181"/>
        <dbReference type="EC" id="4.2.99.18"/>
    </reaction>
</comment>
<comment type="subcellular location">
    <subcellularLocation>
        <location evidence="1">Nucleus</location>
        <location evidence="1">Nucleoplasm</location>
    </subcellularLocation>
    <subcellularLocation>
        <location evidence="1">Nucleus speckle</location>
    </subcellularLocation>
    <subcellularLocation>
        <location evidence="1">Nucleus matrix</location>
    </subcellularLocation>
    <text evidence="1">Together with APEX1 is recruited to nuclear speckles in UVA-irradiated cells.</text>
</comment>
<comment type="tissue specificity">
    <text>Highest expression in testis.</text>
</comment>
<comment type="similarity">
    <text evidence="2">Belongs to the type-1 OGG1 family.</text>
</comment>
<name>OGG1_MOUSE</name>